<name>YIDD_CROS5</name>
<dbReference type="EMBL" id="CP000806">
    <property type="protein sequence ID" value="ACB50097.1"/>
    <property type="molecule type" value="Genomic_DNA"/>
</dbReference>
<dbReference type="RefSeq" id="WP_009545986.1">
    <property type="nucleotide sequence ID" value="NC_010546.1"/>
</dbReference>
<dbReference type="STRING" id="43989.cce_0746"/>
<dbReference type="KEGG" id="cyt:cce_0746"/>
<dbReference type="eggNOG" id="COG0759">
    <property type="taxonomic scope" value="Bacteria"/>
</dbReference>
<dbReference type="HOGENOM" id="CLU_144811_5_2_3"/>
<dbReference type="OrthoDB" id="9801753at2"/>
<dbReference type="Proteomes" id="UP000001203">
    <property type="component" value="Chromosome circular"/>
</dbReference>
<dbReference type="GO" id="GO:0005886">
    <property type="term" value="C:plasma membrane"/>
    <property type="evidence" value="ECO:0007669"/>
    <property type="project" value="UniProtKB-SubCell"/>
</dbReference>
<dbReference type="HAMAP" id="MF_00386">
    <property type="entry name" value="UPF0161_YidD"/>
    <property type="match status" value="1"/>
</dbReference>
<dbReference type="InterPro" id="IPR002696">
    <property type="entry name" value="Membr_insert_effic_factor_YidD"/>
</dbReference>
<dbReference type="NCBIfam" id="TIGR00278">
    <property type="entry name" value="membrane protein insertion efficiency factor YidD"/>
    <property type="match status" value="1"/>
</dbReference>
<dbReference type="PANTHER" id="PTHR33383">
    <property type="entry name" value="MEMBRANE PROTEIN INSERTION EFFICIENCY FACTOR-RELATED"/>
    <property type="match status" value="1"/>
</dbReference>
<dbReference type="PANTHER" id="PTHR33383:SF1">
    <property type="entry name" value="MEMBRANE PROTEIN INSERTION EFFICIENCY FACTOR-RELATED"/>
    <property type="match status" value="1"/>
</dbReference>
<dbReference type="Pfam" id="PF01809">
    <property type="entry name" value="YidD"/>
    <property type="match status" value="1"/>
</dbReference>
<dbReference type="SMART" id="SM01234">
    <property type="entry name" value="Haemolytic"/>
    <property type="match status" value="1"/>
</dbReference>
<accession>B1WR39</accession>
<reference key="1">
    <citation type="journal article" date="2008" name="Proc. Natl. Acad. Sci. U.S.A.">
        <title>The genome of Cyanothece 51142, a unicellular diazotrophic cyanobacterium important in the marine nitrogen cycle.</title>
        <authorList>
            <person name="Welsh E.A."/>
            <person name="Liberton M."/>
            <person name="Stoeckel J."/>
            <person name="Loh T."/>
            <person name="Elvitigala T."/>
            <person name="Wang C."/>
            <person name="Wollam A."/>
            <person name="Fulton R.S."/>
            <person name="Clifton S.W."/>
            <person name="Jacobs J.M."/>
            <person name="Aurora R."/>
            <person name="Ghosh B.K."/>
            <person name="Sherman L.A."/>
            <person name="Smith R.D."/>
            <person name="Wilson R.K."/>
            <person name="Pakrasi H.B."/>
        </authorList>
    </citation>
    <scope>NUCLEOTIDE SEQUENCE [LARGE SCALE GENOMIC DNA]</scope>
    <source>
        <strain>ATCC 51142 / BH68</strain>
    </source>
</reference>
<organism>
    <name type="scientific">Crocosphaera subtropica (strain ATCC 51142 / BH68)</name>
    <name type="common">Cyanothece sp. (strain ATCC 51142)</name>
    <dbReference type="NCBI Taxonomy" id="43989"/>
    <lineage>
        <taxon>Bacteria</taxon>
        <taxon>Bacillati</taxon>
        <taxon>Cyanobacteriota</taxon>
        <taxon>Cyanophyceae</taxon>
        <taxon>Oscillatoriophycideae</taxon>
        <taxon>Chroococcales</taxon>
        <taxon>Aphanothecaceae</taxon>
        <taxon>Crocosphaera</taxon>
        <taxon>Crocosphaera subtropica</taxon>
    </lineage>
</organism>
<keyword id="KW-0997">Cell inner membrane</keyword>
<keyword id="KW-1003">Cell membrane</keyword>
<keyword id="KW-0472">Membrane</keyword>
<keyword id="KW-1185">Reference proteome</keyword>
<sequence>MKKTLILLIKGYRRLISPLFPPSCRFQPTCSQYTLEAIEKFGALRGSWLGLRRILRCHPFHPGGYDPVPPVTKK</sequence>
<feature type="chain" id="PRO_1000197749" description="Putative membrane protein insertion efficiency factor">
    <location>
        <begin position="1"/>
        <end position="74"/>
    </location>
</feature>
<evidence type="ECO:0000255" key="1">
    <source>
        <dbReference type="HAMAP-Rule" id="MF_00386"/>
    </source>
</evidence>
<gene>
    <name type="ordered locus">cce_0746</name>
</gene>
<protein>
    <recommendedName>
        <fullName evidence="1">Putative membrane protein insertion efficiency factor</fullName>
    </recommendedName>
</protein>
<proteinExistence type="inferred from homology"/>
<comment type="function">
    <text evidence="1">Could be involved in insertion of integral membrane proteins into the membrane.</text>
</comment>
<comment type="subcellular location">
    <subcellularLocation>
        <location evidence="1">Cell inner membrane</location>
        <topology evidence="1">Peripheral membrane protein</topology>
        <orientation evidence="1">Cytoplasmic side</orientation>
    </subcellularLocation>
</comment>
<comment type="similarity">
    <text evidence="1">Belongs to the UPF0161 family.</text>
</comment>